<accession>Q4WZ63</accession>
<gene>
    <name evidence="12" type="primary">easC</name>
    <name type="ORF">AFUA_2G18030</name>
</gene>
<reference key="1">
    <citation type="journal article" date="2005" name="Nature">
        <title>Genomic sequence of the pathogenic and allergenic filamentous fungus Aspergillus fumigatus.</title>
        <authorList>
            <person name="Nierman W.C."/>
            <person name="Pain A."/>
            <person name="Anderson M.J."/>
            <person name="Wortman J.R."/>
            <person name="Kim H.S."/>
            <person name="Arroyo J."/>
            <person name="Berriman M."/>
            <person name="Abe K."/>
            <person name="Archer D.B."/>
            <person name="Bermejo C."/>
            <person name="Bennett J.W."/>
            <person name="Bowyer P."/>
            <person name="Chen D."/>
            <person name="Collins M."/>
            <person name="Coulsen R."/>
            <person name="Davies R."/>
            <person name="Dyer P.S."/>
            <person name="Farman M.L."/>
            <person name="Fedorova N."/>
            <person name="Fedorova N.D."/>
            <person name="Feldblyum T.V."/>
            <person name="Fischer R."/>
            <person name="Fosker N."/>
            <person name="Fraser A."/>
            <person name="Garcia J.L."/>
            <person name="Garcia M.J."/>
            <person name="Goble A."/>
            <person name="Goldman G.H."/>
            <person name="Gomi K."/>
            <person name="Griffith-Jones S."/>
            <person name="Gwilliam R."/>
            <person name="Haas B.J."/>
            <person name="Haas H."/>
            <person name="Harris D.E."/>
            <person name="Horiuchi H."/>
            <person name="Huang J."/>
            <person name="Humphray S."/>
            <person name="Jimenez J."/>
            <person name="Keller N."/>
            <person name="Khouri H."/>
            <person name="Kitamoto K."/>
            <person name="Kobayashi T."/>
            <person name="Konzack S."/>
            <person name="Kulkarni R."/>
            <person name="Kumagai T."/>
            <person name="Lafton A."/>
            <person name="Latge J.-P."/>
            <person name="Li W."/>
            <person name="Lord A."/>
            <person name="Lu C."/>
            <person name="Majoros W.H."/>
            <person name="May G.S."/>
            <person name="Miller B.L."/>
            <person name="Mohamoud Y."/>
            <person name="Molina M."/>
            <person name="Monod M."/>
            <person name="Mouyna I."/>
            <person name="Mulligan S."/>
            <person name="Murphy L.D."/>
            <person name="O'Neil S."/>
            <person name="Paulsen I."/>
            <person name="Penalva M.A."/>
            <person name="Pertea M."/>
            <person name="Price C."/>
            <person name="Pritchard B.L."/>
            <person name="Quail M.A."/>
            <person name="Rabbinowitsch E."/>
            <person name="Rawlins N."/>
            <person name="Rajandream M.A."/>
            <person name="Reichard U."/>
            <person name="Renauld H."/>
            <person name="Robson G.D."/>
            <person name="Rodriguez de Cordoba S."/>
            <person name="Rodriguez-Pena J.M."/>
            <person name="Ronning C.M."/>
            <person name="Rutter S."/>
            <person name="Salzberg S.L."/>
            <person name="Sanchez M."/>
            <person name="Sanchez-Ferrero J.C."/>
            <person name="Saunders D."/>
            <person name="Seeger K."/>
            <person name="Squares R."/>
            <person name="Squares S."/>
            <person name="Takeuchi M."/>
            <person name="Tekaia F."/>
            <person name="Turner G."/>
            <person name="Vazquez de Aldana C.R."/>
            <person name="Weidman J."/>
            <person name="White O."/>
            <person name="Woodward J.R."/>
            <person name="Yu J.-H."/>
            <person name="Fraser C.M."/>
            <person name="Galagan J.E."/>
            <person name="Asai K."/>
            <person name="Machida M."/>
            <person name="Hall N."/>
            <person name="Barrell B.G."/>
            <person name="Denning D.W."/>
        </authorList>
    </citation>
    <scope>NUCLEOTIDE SEQUENCE [LARGE SCALE GENOMIC DNA]</scope>
    <source>
        <strain>ATCC MYA-4609 / CBS 101355 / FGSC A1100 / Af293</strain>
    </source>
</reference>
<reference key="2">
    <citation type="journal article" date="2005" name="Appl. Environ. Microbiol.">
        <title>An ergot alkaloid biosynthesis gene and clustered hypothetical genes from Aspergillus fumigatus.</title>
        <authorList>
            <person name="Coyle C.M."/>
            <person name="Panaccione D.G."/>
        </authorList>
    </citation>
    <scope>IDENTIFICATION</scope>
    <scope>FUNCTION</scope>
</reference>
<reference key="3">
    <citation type="journal article" date="2005" name="Microbiology">
        <title>Overproduction, purification and characterization of FgaPT2, a dimethylallyltryptophan synthase from Aspergillus fumigatus.</title>
        <authorList>
            <person name="Unsoeld I.A."/>
            <person name="Li S.-M."/>
        </authorList>
    </citation>
    <scope>FUNCTION</scope>
</reference>
<reference key="4">
    <citation type="journal article" date="2009" name="ChemBioChem">
        <title>Ergot alkaloid biosynthesis in Aspergillus fumigatus: FgaAT catalyses the acetylation of fumigaclavine B.</title>
        <authorList>
            <person name="Liu X."/>
            <person name="Wang L."/>
            <person name="Steffan N."/>
            <person name="Yin W.B."/>
            <person name="Li S.M."/>
        </authorList>
    </citation>
    <scope>FUNCTION</scope>
</reference>
<reference key="5">
    <citation type="journal article" date="2009" name="Eukaryot. Cell">
        <title>Transcriptional profiling identifies a role for BrlA in the response to nitrogen depletion and for StuA in the regulation of secondary metabolite clusters in Aspergillus fumigatus.</title>
        <authorList>
            <person name="Twumasi-Boateng K."/>
            <person name="Yu Y."/>
            <person name="Chen D."/>
            <person name="Gravelat F.N."/>
            <person name="Nierman W.C."/>
            <person name="Sheppard D.C."/>
        </authorList>
    </citation>
    <scope>INDUCTION</scope>
</reference>
<reference key="6">
    <citation type="journal article" date="2009" name="Mol. Plant Pathol.">
        <title>Ergot: from witchcraft to biotechnology.</title>
        <authorList>
            <person name="Haarmann T."/>
            <person name="Rolke Y."/>
            <person name="Giesbert S."/>
            <person name="Tudzynski P."/>
        </authorList>
    </citation>
    <scope>BIOTECHNOLOGY</scope>
</reference>
<reference key="7">
    <citation type="journal article" date="2010" name="Arch. Microbiol.">
        <title>Ergot alkaloid biosynthesis in Aspergillus fumigatus: conversion of chanoclavine-I to chanoclavine-I aldehyde catalyzed by a short-chain alcohol dehydrogenase FgaDH.</title>
        <authorList>
            <person name="Wallwey C."/>
            <person name="Matuschek M."/>
            <person name="Li S.M."/>
        </authorList>
    </citation>
    <scope>FUNCTION</scope>
</reference>
<reference key="8">
    <citation type="journal article" date="2010" name="Org. Biomol. Chem.">
        <title>Ergot alkaloid biosynthesis in Aspergillus fumigatus: Conversion of chanoclavine-I aldehyde to festuclavine by the festuclavine synthase FgaFS in the presence of the old yellow enzyme FgaOx3.</title>
        <authorList>
            <person name="Wallwey C."/>
            <person name="Matuschek M."/>
            <person name="Xie X.L."/>
            <person name="Li S.M."/>
        </authorList>
    </citation>
    <scope>FUNCTION</scope>
</reference>
<reference key="9">
    <citation type="journal article" date="2011" name="Curr. Genet.">
        <title>Ergot cluster-encoded catalase is required for synthesis of chanoclavine-I in Aspergillus fumigatus.</title>
        <authorList>
            <person name="Goetz K.E."/>
            <person name="Coyle C.M."/>
            <person name="Cheng J.Z."/>
            <person name="O'Connor S.E."/>
            <person name="Panaccione D.G."/>
        </authorList>
    </citation>
    <scope>FUNCTION</scope>
    <scope>CATALYTIC ACTIVITY</scope>
    <scope>DISRUPTION PHENOTYPE</scope>
</reference>
<reference key="10">
    <citation type="journal article" date="2012" name="Mycologia">
        <title>Chemotypic and genotypic diversity in the ergot alkaloid pathway of Aspergillus fumigatus.</title>
        <authorList>
            <person name="Robinson S.L."/>
            <person name="Panaccione D.G."/>
        </authorList>
    </citation>
    <scope>IDENTIFICATION</scope>
    <scope>NOMENCLATURE</scope>
</reference>
<reference key="11">
    <citation type="journal article" date="2013" name="Toxins">
        <title>Partial reconstruction of the ergot alkaloid pathway by heterologous gene expression in Aspergillus nidulans.</title>
        <authorList>
            <person name="Ryan K.L."/>
            <person name="Moore C.T."/>
            <person name="Panaccione D.G."/>
        </authorList>
    </citation>
    <scope>FUNCTION</scope>
    <scope>PATHWAY</scope>
</reference>
<reference key="12">
    <citation type="journal article" date="2016" name="Curr. Genet.">
        <title>Functional analysis of the gene controlling hydroxylation of festuclavine in the ergot alkaloid pathway of Neosartorya fumigata.</title>
        <authorList>
            <person name="Bilovol Y."/>
            <person name="Panaccione D.G."/>
        </authorList>
    </citation>
    <scope>FUNCTION</scope>
</reference>
<name>EASC_ASPFU</name>
<keyword id="KW-0017">Alkaloid metabolism</keyword>
<keyword id="KW-0349">Heme</keyword>
<keyword id="KW-0376">Hydrogen peroxide</keyword>
<keyword id="KW-0408">Iron</keyword>
<keyword id="KW-0479">Metal-binding</keyword>
<keyword id="KW-0560">Oxidoreductase</keyword>
<keyword id="KW-0575">Peroxidase</keyword>
<keyword id="KW-1185">Reference proteome</keyword>
<organism>
    <name type="scientific">Aspergillus fumigatus (strain ATCC MYA-4609 / CBS 101355 / FGSC A1100 / Af293)</name>
    <name type="common">Neosartorya fumigata</name>
    <dbReference type="NCBI Taxonomy" id="330879"/>
    <lineage>
        <taxon>Eukaryota</taxon>
        <taxon>Fungi</taxon>
        <taxon>Dikarya</taxon>
        <taxon>Ascomycota</taxon>
        <taxon>Pezizomycotina</taxon>
        <taxon>Eurotiomycetes</taxon>
        <taxon>Eurotiomycetidae</taxon>
        <taxon>Eurotiales</taxon>
        <taxon>Aspergillaceae</taxon>
        <taxon>Aspergillus</taxon>
        <taxon>Aspergillus subgen. Fumigati</taxon>
    </lineage>
</organism>
<feature type="chain" id="PRO_0000436410" description="Catalase easC">
    <location>
        <begin position="1"/>
        <end position="520"/>
    </location>
</feature>
<feature type="active site" evidence="2">
    <location>
        <position position="71"/>
    </location>
</feature>
<feature type="binding site" description="axial binding residue" evidence="2">
    <location>
        <position position="361"/>
    </location>
    <ligand>
        <name>heme</name>
        <dbReference type="ChEBI" id="CHEBI:30413"/>
    </ligand>
    <ligandPart>
        <name>Fe</name>
        <dbReference type="ChEBI" id="CHEBI:18248"/>
    </ligandPart>
</feature>
<protein>
    <recommendedName>
        <fullName evidence="13">Catalase easC</fullName>
        <ecNumber evidence="9">1.11.-.-</ecNumber>
    </recommendedName>
    <alternativeName>
        <fullName evidence="12">Ergot alkaloid synthesis protein C</fullName>
    </alternativeName>
</protein>
<dbReference type="EC" id="1.11.-.-" evidence="9"/>
<dbReference type="EMBL" id="AAHF01000001">
    <property type="protein sequence ID" value="EAL94102.1"/>
    <property type="molecule type" value="Genomic_DNA"/>
</dbReference>
<dbReference type="RefSeq" id="XP_756140.1">
    <property type="nucleotide sequence ID" value="XM_751047.1"/>
</dbReference>
<dbReference type="SMR" id="Q4WZ63"/>
<dbReference type="FunCoup" id="Q4WZ63">
    <property type="interactions" value="973"/>
</dbReference>
<dbReference type="STRING" id="330879.Q4WZ63"/>
<dbReference type="EnsemblFungi" id="EAL94102">
    <property type="protein sequence ID" value="EAL94102"/>
    <property type="gene ID" value="AFUA_2G18030"/>
</dbReference>
<dbReference type="GeneID" id="3512715"/>
<dbReference type="KEGG" id="afm:AFUA_2G18030"/>
<dbReference type="VEuPathDB" id="FungiDB:Afu2g18030"/>
<dbReference type="eggNOG" id="KOG0047">
    <property type="taxonomic scope" value="Eukaryota"/>
</dbReference>
<dbReference type="HOGENOM" id="CLU_010645_2_0_1"/>
<dbReference type="InParanoid" id="Q4WZ63"/>
<dbReference type="OMA" id="GSFKYVH"/>
<dbReference type="OrthoDB" id="6880011at2759"/>
<dbReference type="UniPathway" id="UPA00327"/>
<dbReference type="Proteomes" id="UP000002530">
    <property type="component" value="Chromosome 2"/>
</dbReference>
<dbReference type="GO" id="GO:0005737">
    <property type="term" value="C:cytoplasm"/>
    <property type="evidence" value="ECO:0000318"/>
    <property type="project" value="GO_Central"/>
</dbReference>
<dbReference type="GO" id="GO:0005739">
    <property type="term" value="C:mitochondrion"/>
    <property type="evidence" value="ECO:0000318"/>
    <property type="project" value="GO_Central"/>
</dbReference>
<dbReference type="GO" id="GO:0005777">
    <property type="term" value="C:peroxisome"/>
    <property type="evidence" value="ECO:0000318"/>
    <property type="project" value="GO_Central"/>
</dbReference>
<dbReference type="GO" id="GO:0004096">
    <property type="term" value="F:catalase activity"/>
    <property type="evidence" value="ECO:0000318"/>
    <property type="project" value="GO_Central"/>
</dbReference>
<dbReference type="GO" id="GO:0020037">
    <property type="term" value="F:heme binding"/>
    <property type="evidence" value="ECO:0000318"/>
    <property type="project" value="GO_Central"/>
</dbReference>
<dbReference type="GO" id="GO:0046872">
    <property type="term" value="F:metal ion binding"/>
    <property type="evidence" value="ECO:0007669"/>
    <property type="project" value="UniProtKB-KW"/>
</dbReference>
<dbReference type="GO" id="GO:1900809">
    <property type="term" value="P:fumigaclavine C biosynthetic process"/>
    <property type="evidence" value="ECO:0000314"/>
    <property type="project" value="GO_Central"/>
</dbReference>
<dbReference type="GO" id="GO:0042744">
    <property type="term" value="P:hydrogen peroxide catabolic process"/>
    <property type="evidence" value="ECO:0000318"/>
    <property type="project" value="GO_Central"/>
</dbReference>
<dbReference type="GO" id="GO:0042542">
    <property type="term" value="P:response to hydrogen peroxide"/>
    <property type="evidence" value="ECO:0000318"/>
    <property type="project" value="GO_Central"/>
</dbReference>
<dbReference type="FunFam" id="2.40.180.10:FF:000019">
    <property type="entry name" value="Catalase"/>
    <property type="match status" value="1"/>
</dbReference>
<dbReference type="Gene3D" id="2.40.180.10">
    <property type="entry name" value="Catalase core domain"/>
    <property type="match status" value="1"/>
</dbReference>
<dbReference type="InterPro" id="IPR018028">
    <property type="entry name" value="Catalase"/>
</dbReference>
<dbReference type="InterPro" id="IPR024708">
    <property type="entry name" value="Catalase_AS"/>
</dbReference>
<dbReference type="InterPro" id="IPR024711">
    <property type="entry name" value="Catalase_clade1/3"/>
</dbReference>
<dbReference type="InterPro" id="IPR011614">
    <property type="entry name" value="Catalase_core"/>
</dbReference>
<dbReference type="InterPro" id="IPR002226">
    <property type="entry name" value="Catalase_haem_BS"/>
</dbReference>
<dbReference type="InterPro" id="IPR020835">
    <property type="entry name" value="Catalase_sf"/>
</dbReference>
<dbReference type="PANTHER" id="PTHR11465">
    <property type="entry name" value="CATALASE"/>
    <property type="match status" value="1"/>
</dbReference>
<dbReference type="PANTHER" id="PTHR11465:SF9">
    <property type="entry name" value="CATALASE"/>
    <property type="match status" value="1"/>
</dbReference>
<dbReference type="Pfam" id="PF00199">
    <property type="entry name" value="Catalase"/>
    <property type="match status" value="1"/>
</dbReference>
<dbReference type="PIRSF" id="PIRSF038928">
    <property type="entry name" value="Catalase_clade1-3"/>
    <property type="match status" value="1"/>
</dbReference>
<dbReference type="PRINTS" id="PR00067">
    <property type="entry name" value="CATALASE"/>
</dbReference>
<dbReference type="SMART" id="SM01060">
    <property type="entry name" value="Catalase"/>
    <property type="match status" value="1"/>
</dbReference>
<dbReference type="SUPFAM" id="SSF56634">
    <property type="entry name" value="Heme-dependent catalase-like"/>
    <property type="match status" value="1"/>
</dbReference>
<dbReference type="PROSITE" id="PS00437">
    <property type="entry name" value="CATALASE_1"/>
    <property type="match status" value="1"/>
</dbReference>
<dbReference type="PROSITE" id="PS00438">
    <property type="entry name" value="CATALASE_2"/>
    <property type="match status" value="1"/>
</dbReference>
<dbReference type="PROSITE" id="PS51402">
    <property type="entry name" value="CATALASE_3"/>
    <property type="match status" value="1"/>
</dbReference>
<comment type="function">
    <text evidence="1 3 4 6 7 8 9 10 11">Catalase; part of the gene cluster that mediates the biosynthesis of fumiclavanine C, a fungal ergot alkaloid (PubMed:15933009, PubMed:23435153, PubMed:26972831). DmaW catalyzes the first step of ergot alkaloid biosynthesis by condensing dimethylallyl diphosphate (DMAP) and tryptophan to form 4-dimethylallyl-L-tryptophan (PubMed:15870460). The second step is catalyzed by the methyltransferase easF that methylates 4-dimethylallyl-L-tryptophan in the presence of S-adenosyl-L-methionine, resulting in the formation of 4-dimethylallyl-L-abrine (By similarity). The catalase easC and the FAD-dependent oxidoreductase easE then transform 4-dimethylallyl-L-abrine to chanoclavine-I which is further oxidized by EasD in the presence of NAD(+), resulting in the formation of chanoclavine-I aldehyde (PubMed:20039019, PubMed:20526482, PubMed:21409592, PubMed:23435153). EasA reduces chanoclavine-I aldehyde to dihydrochanoclavine-I aldehyde that spontaneously dehydrates to form 6,8-dimethyl-6,7-didehydroergoline (PubMed:20526482). EasG then catalyzes the reduction of 6,8-dimethyl-6,7-didehydroergoline to form festuclavine (PubMed:20526482). Hydrolysis of festuclavine by easM then leads to the formation of fumigaclavine B which is in turn acetylated by easN to fumigaclavine A (PubMed:26972831). Finally, easL catalyzes the conversion of fumigaclavine A into fumigaclavine C by attaching a dimethylallyl moiety to C-2 of the indole nucleus (PubMed:19672909).</text>
</comment>
<comment type="cofactor">
    <cofactor evidence="2">
        <name>heme</name>
        <dbReference type="ChEBI" id="CHEBI:30413"/>
    </cofactor>
</comment>
<comment type="pathway">
    <text evidence="9 10">Alkaloid biosynthesis; ergot alkaloid biosynthesis.</text>
</comment>
<comment type="induction">
    <text evidence="5">The expression of the ergot alkaloid synthesis cluster which leads to the synthesis of fumigaclavines is positively regulated by the brlA and stuA transcription factors (PubMed:19028996).</text>
</comment>
<comment type="disruption phenotype">
    <text evidence="9">Accumulates the intermediate 4-dimethylallyl-L-abrine (PubMed:21409592).</text>
</comment>
<comment type="biotechnology">
    <text evidence="14">Ergot alkaloids are known for their toxic effects on humans who consume contaminated grains or livestock that graze on grasses harboring ergot alkaloid-producing fungi (PubMed:19523108). Due to their strong affinity for monoamine neurotransmitter receptors they may also have clinical uses such as treatment of migraines, Parkinson's disease and cerebrovascular insufficiency (PubMed:19523108).</text>
</comment>
<comment type="similarity">
    <text evidence="13">Belongs to the catalase family.</text>
</comment>
<evidence type="ECO:0000250" key="1">
    <source>
        <dbReference type="UniProtKB" id="B6D5I7"/>
    </source>
</evidence>
<evidence type="ECO:0000250" key="2">
    <source>
        <dbReference type="UniProtKB" id="P15202"/>
    </source>
</evidence>
<evidence type="ECO:0000269" key="3">
    <source>
    </source>
</evidence>
<evidence type="ECO:0000269" key="4">
    <source>
    </source>
</evidence>
<evidence type="ECO:0000269" key="5">
    <source>
    </source>
</evidence>
<evidence type="ECO:0000269" key="6">
    <source>
    </source>
</evidence>
<evidence type="ECO:0000269" key="7">
    <source>
    </source>
</evidence>
<evidence type="ECO:0000269" key="8">
    <source>
    </source>
</evidence>
<evidence type="ECO:0000269" key="9">
    <source>
    </source>
</evidence>
<evidence type="ECO:0000269" key="10">
    <source>
    </source>
</evidence>
<evidence type="ECO:0000269" key="11">
    <source>
    </source>
</evidence>
<evidence type="ECO:0000303" key="12">
    <source>
    </source>
</evidence>
<evidence type="ECO:0000305" key="13"/>
<evidence type="ECO:0000305" key="14">
    <source>
    </source>
</evidence>
<proteinExistence type="evidence at protein level"/>
<sequence>MLIERGLLSIMASKCSGTWSTYKTYTTANGCPFMKPEGPPADGRTLALNDHHLVESLAHFNREKIPERAVHAKGAAAYGEFEVTADISDICNIDMLLGVGKKTPCVTRFSTTGLERGSAEGMRDLKGMATKFYTKEGNWDWVCLNFPFFFIRDPLKFPSLMHAQRRDPRTNLLNPNMYWDWVTSNHESLHMVLLQFSDFGTMFNWRSLSGYMGHAYKWVMPNGSFKYVHIFLSSDRGPNFSQGEQAKDNSDLDPDHATRDLYEAIERGDYPTWTANVQVVDPAEAPDLGFNILDVTKHWNLGTYPKDLPKIPSRPFGKLTLNRIPDNFFAEVEQLAFSPSNMVPGVLPSEDPILQARMFAYPDAQRYRLGPNHHKIPVNQCPMTFNPTLRDGTGTFDANYGSLPGYVSESQGVNFARPQEHDPKFNAWLSQLSSRPWMQTNENDYKFPRDFYNALPEFRSQEFQDKMVENIIASVAQTRREIREKVYHTFHLVDPELSARVKRGVEKMDASFKQVSLSRL</sequence>